<comment type="function">
    <text evidence="2">The physiological role of BioH is to remove the methyl group introduced by BioC when the pimeloyl moiety is complete. It allows to synthesize pimeloyl-ACP via the fatty acid synthetic pathway through the hydrolysis of the ester bonds of pimeloyl-ACP esters.</text>
</comment>
<comment type="catalytic activity">
    <reaction evidence="2">
        <text>6-carboxyhexanoyl-[ACP] methyl ester + H2O = 6-carboxyhexanoyl-[ACP] + methanol + H(+)</text>
        <dbReference type="Rhea" id="RHEA:42700"/>
        <dbReference type="Rhea" id="RHEA-COMP:9955"/>
        <dbReference type="Rhea" id="RHEA-COMP:10186"/>
        <dbReference type="ChEBI" id="CHEBI:15377"/>
        <dbReference type="ChEBI" id="CHEBI:15378"/>
        <dbReference type="ChEBI" id="CHEBI:17790"/>
        <dbReference type="ChEBI" id="CHEBI:78846"/>
        <dbReference type="ChEBI" id="CHEBI:82735"/>
        <dbReference type="EC" id="3.1.1.85"/>
    </reaction>
</comment>
<comment type="pathway">
    <text evidence="2">Cofactor biosynthesis; biotin biosynthesis.</text>
</comment>
<comment type="subunit">
    <text evidence="2">Monomer.</text>
</comment>
<comment type="subcellular location">
    <subcellularLocation>
        <location evidence="2">Cytoplasm</location>
    </subcellularLocation>
</comment>
<comment type="similarity">
    <text evidence="2">Belongs to the AB hydrolase superfamily. Carboxylesterase BioH family.</text>
</comment>
<dbReference type="EC" id="3.1.1.85" evidence="2"/>
<dbReference type="EMBL" id="AE006468">
    <property type="protein sequence ID" value="AAL22371.1"/>
    <property type="molecule type" value="Genomic_DNA"/>
</dbReference>
<dbReference type="RefSeq" id="NP_462412.1">
    <property type="nucleotide sequence ID" value="NC_003197.2"/>
</dbReference>
<dbReference type="RefSeq" id="WP_000998146.1">
    <property type="nucleotide sequence ID" value="NC_003197.2"/>
</dbReference>
<dbReference type="PDB" id="4NMW">
    <property type="method" value="X-ray"/>
    <property type="resolution" value="1.50 A"/>
    <property type="chains" value="A=1-256"/>
</dbReference>
<dbReference type="PDBsum" id="4NMW"/>
<dbReference type="SMR" id="Q8ZLI9"/>
<dbReference type="STRING" id="99287.STM3509"/>
<dbReference type="ESTHER" id="salty-BIOH">
    <property type="family name" value="BioH"/>
</dbReference>
<dbReference type="PaxDb" id="99287-STM3509"/>
<dbReference type="GeneID" id="1255032"/>
<dbReference type="KEGG" id="stm:STM3509"/>
<dbReference type="PATRIC" id="fig|99287.12.peg.3709"/>
<dbReference type="HOGENOM" id="CLU_020336_12_2_6"/>
<dbReference type="OMA" id="PFISHPQ"/>
<dbReference type="PhylomeDB" id="Q8ZLI9"/>
<dbReference type="BioCyc" id="SENT99287:STM3509-MONOMER"/>
<dbReference type="UniPathway" id="UPA00078"/>
<dbReference type="EvolutionaryTrace" id="Q8ZLI9"/>
<dbReference type="Proteomes" id="UP000001014">
    <property type="component" value="Chromosome"/>
</dbReference>
<dbReference type="GO" id="GO:0005737">
    <property type="term" value="C:cytoplasm"/>
    <property type="evidence" value="ECO:0007669"/>
    <property type="project" value="UniProtKB-SubCell"/>
</dbReference>
<dbReference type="GO" id="GO:0090499">
    <property type="term" value="F:pimelyl-[acyl-carrier protein] methyl ester esterase activity"/>
    <property type="evidence" value="ECO:0000318"/>
    <property type="project" value="GO_Central"/>
</dbReference>
<dbReference type="GO" id="GO:0009102">
    <property type="term" value="P:biotin biosynthetic process"/>
    <property type="evidence" value="ECO:0000318"/>
    <property type="project" value="GO_Central"/>
</dbReference>
<dbReference type="FunFam" id="3.40.50.1820:FF:000045">
    <property type="entry name" value="Pimeloyl-[acyl-carrier protein] methyl ester esterase"/>
    <property type="match status" value="1"/>
</dbReference>
<dbReference type="Gene3D" id="3.40.50.1820">
    <property type="entry name" value="alpha/beta hydrolase"/>
    <property type="match status" value="1"/>
</dbReference>
<dbReference type="HAMAP" id="MF_01260">
    <property type="entry name" value="Carboxylester"/>
    <property type="match status" value="1"/>
</dbReference>
<dbReference type="InterPro" id="IPR000073">
    <property type="entry name" value="AB_hydrolase_1"/>
</dbReference>
<dbReference type="InterPro" id="IPR029058">
    <property type="entry name" value="AB_hydrolase_fold"/>
</dbReference>
<dbReference type="InterPro" id="IPR010076">
    <property type="entry name" value="BioH"/>
</dbReference>
<dbReference type="InterPro" id="IPR050228">
    <property type="entry name" value="Carboxylesterase_BioH"/>
</dbReference>
<dbReference type="NCBIfam" id="TIGR01738">
    <property type="entry name" value="bioH"/>
    <property type="match status" value="1"/>
</dbReference>
<dbReference type="NCBIfam" id="NF007674">
    <property type="entry name" value="PRK10349.1"/>
    <property type="match status" value="1"/>
</dbReference>
<dbReference type="PANTHER" id="PTHR43194">
    <property type="entry name" value="HYDROLASE ALPHA/BETA FOLD FAMILY"/>
    <property type="match status" value="1"/>
</dbReference>
<dbReference type="PANTHER" id="PTHR43194:SF5">
    <property type="entry name" value="PIMELOYL-[ACYL-CARRIER PROTEIN] METHYL ESTER ESTERASE"/>
    <property type="match status" value="1"/>
</dbReference>
<dbReference type="Pfam" id="PF00561">
    <property type="entry name" value="Abhydrolase_1"/>
    <property type="match status" value="1"/>
</dbReference>
<dbReference type="SUPFAM" id="SSF53474">
    <property type="entry name" value="alpha/beta-Hydrolases"/>
    <property type="match status" value="1"/>
</dbReference>
<evidence type="ECO:0000255" key="1"/>
<evidence type="ECO:0000255" key="2">
    <source>
        <dbReference type="HAMAP-Rule" id="MF_01260"/>
    </source>
</evidence>
<evidence type="ECO:0007829" key="3">
    <source>
        <dbReference type="PDB" id="4NMW"/>
    </source>
</evidence>
<reference key="1">
    <citation type="journal article" date="2001" name="Nature">
        <title>Complete genome sequence of Salmonella enterica serovar Typhimurium LT2.</title>
        <authorList>
            <person name="McClelland M."/>
            <person name="Sanderson K.E."/>
            <person name="Spieth J."/>
            <person name="Clifton S.W."/>
            <person name="Latreille P."/>
            <person name="Courtney L."/>
            <person name="Porwollik S."/>
            <person name="Ali J."/>
            <person name="Dante M."/>
            <person name="Du F."/>
            <person name="Hou S."/>
            <person name="Layman D."/>
            <person name="Leonard S."/>
            <person name="Nguyen C."/>
            <person name="Scott K."/>
            <person name="Holmes A."/>
            <person name="Grewal N."/>
            <person name="Mulvaney E."/>
            <person name="Ryan E."/>
            <person name="Sun H."/>
            <person name="Florea L."/>
            <person name="Miller W."/>
            <person name="Stoneking T."/>
            <person name="Nhan M."/>
            <person name="Waterston R."/>
            <person name="Wilson R.K."/>
        </authorList>
    </citation>
    <scope>NUCLEOTIDE SEQUENCE [LARGE SCALE GENOMIC DNA]</scope>
    <source>
        <strain>LT2 / SGSC1412 / ATCC 700720</strain>
    </source>
</reference>
<protein>
    <recommendedName>
        <fullName evidence="2">Pimeloyl-[acyl-carrier protein] methyl ester esterase</fullName>
        <ecNumber evidence="2">3.1.1.85</ecNumber>
    </recommendedName>
    <alternativeName>
        <fullName evidence="2">Biotin synthesis protein BioH</fullName>
    </alternativeName>
    <alternativeName>
        <fullName evidence="2">Carboxylesterase BioH</fullName>
    </alternativeName>
</protein>
<name>BIOH_SALTY</name>
<organism>
    <name type="scientific">Salmonella typhimurium (strain LT2 / SGSC1412 / ATCC 700720)</name>
    <dbReference type="NCBI Taxonomy" id="99287"/>
    <lineage>
        <taxon>Bacteria</taxon>
        <taxon>Pseudomonadati</taxon>
        <taxon>Pseudomonadota</taxon>
        <taxon>Gammaproteobacteria</taxon>
        <taxon>Enterobacterales</taxon>
        <taxon>Enterobacteriaceae</taxon>
        <taxon>Salmonella</taxon>
    </lineage>
</organism>
<keyword id="KW-0002">3D-structure</keyword>
<keyword id="KW-0093">Biotin biosynthesis</keyword>
<keyword id="KW-0963">Cytoplasm</keyword>
<keyword id="KW-0378">Hydrolase</keyword>
<keyword id="KW-1185">Reference proteome</keyword>
<keyword id="KW-0719">Serine esterase</keyword>
<feature type="chain" id="PRO_0000204491" description="Pimeloyl-[acyl-carrier protein] methyl ester esterase">
    <location>
        <begin position="1"/>
        <end position="256"/>
    </location>
</feature>
<feature type="domain" description="AB hydrolase-1" evidence="1">
    <location>
        <begin position="15"/>
        <end position="242"/>
    </location>
</feature>
<feature type="active site" description="Nucleophile" evidence="2">
    <location>
        <position position="82"/>
    </location>
</feature>
<feature type="active site" evidence="2">
    <location>
        <position position="207"/>
    </location>
</feature>
<feature type="active site" evidence="2">
    <location>
        <position position="235"/>
    </location>
</feature>
<feature type="binding site" evidence="2">
    <location>
        <position position="22"/>
    </location>
    <ligand>
        <name>substrate</name>
    </ligand>
</feature>
<feature type="binding site" evidence="2">
    <location>
        <begin position="82"/>
        <end position="83"/>
    </location>
    <ligand>
        <name>substrate</name>
    </ligand>
</feature>
<feature type="binding site" evidence="2">
    <location>
        <begin position="143"/>
        <end position="147"/>
    </location>
    <ligand>
        <name>substrate</name>
    </ligand>
</feature>
<feature type="binding site" evidence="2">
    <location>
        <position position="235"/>
    </location>
    <ligand>
        <name>substrate</name>
    </ligand>
</feature>
<feature type="strand" evidence="3">
    <location>
        <begin position="6"/>
        <end position="9"/>
    </location>
</feature>
<feature type="strand" evidence="3">
    <location>
        <begin position="13"/>
        <end position="19"/>
    </location>
</feature>
<feature type="helix" evidence="3">
    <location>
        <begin position="26"/>
        <end position="32"/>
    </location>
</feature>
<feature type="helix" evidence="3">
    <location>
        <begin position="33"/>
        <end position="37"/>
    </location>
</feature>
<feature type="strand" evidence="3">
    <location>
        <begin position="41"/>
        <end position="45"/>
    </location>
</feature>
<feature type="helix" evidence="3">
    <location>
        <begin position="61"/>
        <end position="69"/>
    </location>
</feature>
<feature type="strand" evidence="3">
    <location>
        <begin position="74"/>
        <end position="81"/>
    </location>
</feature>
<feature type="helix" evidence="3">
    <location>
        <begin position="83"/>
        <end position="94"/>
    </location>
</feature>
<feature type="helix" evidence="3">
    <location>
        <begin position="96"/>
        <end position="98"/>
    </location>
</feature>
<feature type="strand" evidence="3">
    <location>
        <begin position="99"/>
        <end position="106"/>
    </location>
</feature>
<feature type="helix" evidence="3">
    <location>
        <begin position="122"/>
        <end position="132"/>
    </location>
</feature>
<feature type="helix" evidence="3">
    <location>
        <begin position="136"/>
        <end position="145"/>
    </location>
</feature>
<feature type="helix" evidence="3">
    <location>
        <begin position="154"/>
        <end position="166"/>
    </location>
</feature>
<feature type="helix" evidence="3">
    <location>
        <begin position="173"/>
        <end position="185"/>
    </location>
</feature>
<feature type="helix" evidence="3">
    <location>
        <begin position="191"/>
        <end position="194"/>
    </location>
</feature>
<feature type="strand" evidence="3">
    <location>
        <begin position="199"/>
        <end position="204"/>
    </location>
</feature>
<feature type="strand" evidence="3">
    <location>
        <begin position="208"/>
        <end position="210"/>
    </location>
</feature>
<feature type="helix" evidence="3">
    <location>
        <begin position="214"/>
        <end position="221"/>
    </location>
</feature>
<feature type="strand" evidence="3">
    <location>
        <begin position="226"/>
        <end position="230"/>
    </location>
</feature>
<feature type="helix" evidence="3">
    <location>
        <begin position="237"/>
        <end position="240"/>
    </location>
</feature>
<feature type="helix" evidence="3">
    <location>
        <begin position="242"/>
        <end position="254"/>
    </location>
</feature>
<proteinExistence type="evidence at protein level"/>
<gene>
    <name evidence="2" type="primary">bioH</name>
    <name type="ordered locus">STM3509</name>
</gene>
<sequence length="256" mass="28269">MNDIWWQTYGEGNCHLVLLHGWGLNAEVWHCIREELGSHFTLHLVDLPGYGRSSGFGAMTLEEMTAQVAKNAPDQAIWLGWSLGGLVASQMALTHPERVQALVTVASSPCFSAREGWPGIKPEILGGFQQQLSDDFQRTVERFLALQTLGTETARQDARTLKSVVLAQPMPDVEVLNGGLEILKTVDLREALKNVNMPFLRLYGYLDGLVPRKIVPLLDTLWPHSTSQIMAKAAHAPFISHPAAFCQALMTLKSSL</sequence>
<accession>Q8ZLI9</accession>